<feature type="signal peptide" evidence="1">
    <location>
        <begin position="1"/>
        <end position="21"/>
    </location>
</feature>
<feature type="chain" id="PRO_0000033606" description="T-cell receptor beta chain V region A20.2.25">
    <location>
        <begin position="22"/>
        <end position="130" status="greater than"/>
    </location>
</feature>
<feature type="region of interest" description="V segment">
    <location>
        <begin position="22"/>
        <end position="112"/>
    </location>
</feature>
<feature type="region of interest" description="D segment">
    <location>
        <begin position="113"/>
        <end position="115"/>
    </location>
</feature>
<feature type="region of interest" description="J segment">
    <location>
        <begin position="116"/>
        <end position="130"/>
    </location>
</feature>
<feature type="glycosylation site" description="N-linked (GlcNAc...) asparagine" evidence="2">
    <location>
        <position position="36"/>
    </location>
</feature>
<feature type="glycosylation site" description="N-linked (GlcNAc...) asparagine" evidence="2">
    <location>
        <position position="75"/>
    </location>
</feature>
<feature type="non-terminal residue">
    <location>
        <position position="130"/>
    </location>
</feature>
<keyword id="KW-1064">Adaptive immunity</keyword>
<keyword id="KW-0325">Glycoprotein</keyword>
<keyword id="KW-0391">Immunity</keyword>
<keyword id="KW-0393">Immunoglobulin domain</keyword>
<keyword id="KW-0675">Receptor</keyword>
<keyword id="KW-1185">Reference proteome</keyword>
<keyword id="KW-0732">Signal</keyword>
<keyword id="KW-1279">T cell receptor</keyword>
<organism>
    <name type="scientific">Mus musculus</name>
    <name type="common">Mouse</name>
    <dbReference type="NCBI Taxonomy" id="10090"/>
    <lineage>
        <taxon>Eukaryota</taxon>
        <taxon>Metazoa</taxon>
        <taxon>Chordata</taxon>
        <taxon>Craniata</taxon>
        <taxon>Vertebrata</taxon>
        <taxon>Euteleostomi</taxon>
        <taxon>Mammalia</taxon>
        <taxon>Eutheria</taxon>
        <taxon>Euarchontoglires</taxon>
        <taxon>Glires</taxon>
        <taxon>Rodentia</taxon>
        <taxon>Myomorpha</taxon>
        <taxon>Muroidea</taxon>
        <taxon>Muridae</taxon>
        <taxon>Murinae</taxon>
        <taxon>Mus</taxon>
        <taxon>Mus</taxon>
    </lineage>
</organism>
<proteinExistence type="inferred from homology"/>
<sequence>MSCRLLLYVSLCLVETALMNTKITQSPRYLILGRANKSLECEQHLGHNAMYWYKQSAEKPPELMFLYNLKQLIRNETVPSRFIPECPDSSKLLLHISAVDPEDSAVYFCASSHGENTEVFFGKGTTLTVV</sequence>
<protein>
    <recommendedName>
        <fullName>T-cell receptor beta chain V region A20.2.25</fullName>
    </recommendedName>
</protein>
<evidence type="ECO:0000250" key="1"/>
<evidence type="ECO:0000255" key="2"/>
<accession>P06321</accession>
<reference key="1">
    <citation type="journal article" date="1985" name="Proc. Natl. Acad. Sci. U.S.A.">
        <title>Isolation of cDNA clones encoding a T-cell receptor beta-chain from a beef insulin-specific hybridoma.</title>
        <authorList>
            <person name="Morinaga T."/>
            <person name="Fotedar A."/>
            <person name="Singh B."/>
            <person name="Wegmann T.G."/>
            <person name="Tamaoki T."/>
        </authorList>
    </citation>
    <scope>NUCLEOTIDE SEQUENCE</scope>
</reference>
<dbReference type="PIR" id="A02005">
    <property type="entry name" value="RWMS20"/>
</dbReference>
<dbReference type="SMR" id="P06321"/>
<dbReference type="FunCoup" id="P06321">
    <property type="interactions" value="839"/>
</dbReference>
<dbReference type="GlyGen" id="P06321">
    <property type="glycosylation" value="2 sites"/>
</dbReference>
<dbReference type="UCSC" id="uc009bnv.2">
    <property type="organism name" value="mouse"/>
</dbReference>
<dbReference type="InParanoid" id="P06321"/>
<dbReference type="Proteomes" id="UP000000589">
    <property type="component" value="Unplaced"/>
</dbReference>
<dbReference type="RNAct" id="P06321">
    <property type="molecule type" value="protein"/>
</dbReference>
<dbReference type="GO" id="GO:0005886">
    <property type="term" value="C:plasma membrane"/>
    <property type="evidence" value="ECO:0000318"/>
    <property type="project" value="GO_Central"/>
</dbReference>
<dbReference type="GO" id="GO:0042101">
    <property type="term" value="C:T cell receptor complex"/>
    <property type="evidence" value="ECO:0007669"/>
    <property type="project" value="UniProtKB-KW"/>
</dbReference>
<dbReference type="GO" id="GO:0002250">
    <property type="term" value="P:adaptive immune response"/>
    <property type="evidence" value="ECO:0007669"/>
    <property type="project" value="UniProtKB-KW"/>
</dbReference>
<dbReference type="GO" id="GO:0007166">
    <property type="term" value="P:cell surface receptor signaling pathway"/>
    <property type="evidence" value="ECO:0000318"/>
    <property type="project" value="GO_Central"/>
</dbReference>
<dbReference type="CDD" id="cd05899">
    <property type="entry name" value="IgV_TCR_beta"/>
    <property type="match status" value="1"/>
</dbReference>
<dbReference type="Gene3D" id="2.60.40.10">
    <property type="entry name" value="Immunoglobulins"/>
    <property type="match status" value="1"/>
</dbReference>
<dbReference type="InterPro" id="IPR007110">
    <property type="entry name" value="Ig-like_dom"/>
</dbReference>
<dbReference type="InterPro" id="IPR036179">
    <property type="entry name" value="Ig-like_dom_sf"/>
</dbReference>
<dbReference type="InterPro" id="IPR013783">
    <property type="entry name" value="Ig-like_fold"/>
</dbReference>
<dbReference type="InterPro" id="IPR003599">
    <property type="entry name" value="Ig_sub"/>
</dbReference>
<dbReference type="InterPro" id="IPR013106">
    <property type="entry name" value="Ig_V-set"/>
</dbReference>
<dbReference type="InterPro" id="IPR050413">
    <property type="entry name" value="TCR_beta_variable"/>
</dbReference>
<dbReference type="PANTHER" id="PTHR23268:SF40">
    <property type="entry name" value="T CELL RECEPTOR BETA VARIABLE 4-1"/>
    <property type="match status" value="1"/>
</dbReference>
<dbReference type="PANTHER" id="PTHR23268">
    <property type="entry name" value="T-CELL RECEPTOR BETA CHAIN"/>
    <property type="match status" value="1"/>
</dbReference>
<dbReference type="Pfam" id="PF07686">
    <property type="entry name" value="V-set"/>
    <property type="match status" value="1"/>
</dbReference>
<dbReference type="SMART" id="SM00409">
    <property type="entry name" value="IG"/>
    <property type="match status" value="1"/>
</dbReference>
<dbReference type="SMART" id="SM00406">
    <property type="entry name" value="IGv"/>
    <property type="match status" value="1"/>
</dbReference>
<dbReference type="SUPFAM" id="SSF48726">
    <property type="entry name" value="Immunoglobulin"/>
    <property type="match status" value="1"/>
</dbReference>
<dbReference type="PROSITE" id="PS50835">
    <property type="entry name" value="IG_LIKE"/>
    <property type="match status" value="1"/>
</dbReference>
<name>TVB8_MOUSE</name>